<dbReference type="EMBL" id="AE009949">
    <property type="protein sequence ID" value="AAL97589.1"/>
    <property type="molecule type" value="Genomic_DNA"/>
</dbReference>
<dbReference type="SMR" id="Q8P1C8"/>
<dbReference type="KEGG" id="spm:spyM18_0947"/>
<dbReference type="HOGENOM" id="CLU_033732_3_0_9"/>
<dbReference type="GO" id="GO:0005829">
    <property type="term" value="C:cytosol"/>
    <property type="evidence" value="ECO:0007669"/>
    <property type="project" value="TreeGrafter"/>
</dbReference>
<dbReference type="GO" id="GO:0005525">
    <property type="term" value="F:GTP binding"/>
    <property type="evidence" value="ECO:0007669"/>
    <property type="project" value="UniProtKB-UniRule"/>
</dbReference>
<dbReference type="GO" id="GO:0046872">
    <property type="term" value="F:metal ion binding"/>
    <property type="evidence" value="ECO:0007669"/>
    <property type="project" value="UniProtKB-KW"/>
</dbReference>
<dbReference type="GO" id="GO:0000917">
    <property type="term" value="P:division septum assembly"/>
    <property type="evidence" value="ECO:0007669"/>
    <property type="project" value="UniProtKB-KW"/>
</dbReference>
<dbReference type="CDD" id="cd01876">
    <property type="entry name" value="YihA_EngB"/>
    <property type="match status" value="1"/>
</dbReference>
<dbReference type="FunFam" id="3.40.50.300:FF:000098">
    <property type="entry name" value="Probable GTP-binding protein EngB"/>
    <property type="match status" value="1"/>
</dbReference>
<dbReference type="Gene3D" id="3.40.50.300">
    <property type="entry name" value="P-loop containing nucleotide triphosphate hydrolases"/>
    <property type="match status" value="1"/>
</dbReference>
<dbReference type="HAMAP" id="MF_00321">
    <property type="entry name" value="GTPase_EngB"/>
    <property type="match status" value="1"/>
</dbReference>
<dbReference type="InterPro" id="IPR030393">
    <property type="entry name" value="G_ENGB_dom"/>
</dbReference>
<dbReference type="InterPro" id="IPR006073">
    <property type="entry name" value="GTP-bd"/>
</dbReference>
<dbReference type="InterPro" id="IPR019987">
    <property type="entry name" value="GTP-bd_ribosome_bio_YsxC"/>
</dbReference>
<dbReference type="InterPro" id="IPR027417">
    <property type="entry name" value="P-loop_NTPase"/>
</dbReference>
<dbReference type="InterPro" id="IPR005225">
    <property type="entry name" value="Small_GTP-bd"/>
</dbReference>
<dbReference type="NCBIfam" id="TIGR03598">
    <property type="entry name" value="GTPase_YsxC"/>
    <property type="match status" value="1"/>
</dbReference>
<dbReference type="NCBIfam" id="TIGR00231">
    <property type="entry name" value="small_GTP"/>
    <property type="match status" value="1"/>
</dbReference>
<dbReference type="PANTHER" id="PTHR11649:SF13">
    <property type="entry name" value="ENGB-TYPE G DOMAIN-CONTAINING PROTEIN"/>
    <property type="match status" value="1"/>
</dbReference>
<dbReference type="PANTHER" id="PTHR11649">
    <property type="entry name" value="MSS1/TRME-RELATED GTP-BINDING PROTEIN"/>
    <property type="match status" value="1"/>
</dbReference>
<dbReference type="Pfam" id="PF01926">
    <property type="entry name" value="MMR_HSR1"/>
    <property type="match status" value="1"/>
</dbReference>
<dbReference type="SUPFAM" id="SSF52540">
    <property type="entry name" value="P-loop containing nucleoside triphosphate hydrolases"/>
    <property type="match status" value="1"/>
</dbReference>
<dbReference type="PROSITE" id="PS51706">
    <property type="entry name" value="G_ENGB"/>
    <property type="match status" value="1"/>
</dbReference>
<name>ENGB_STRP8</name>
<evidence type="ECO:0000255" key="1">
    <source>
        <dbReference type="HAMAP-Rule" id="MF_00321"/>
    </source>
</evidence>
<comment type="function">
    <text evidence="1">Necessary for normal cell division and for the maintenance of normal septation.</text>
</comment>
<comment type="cofactor">
    <cofactor evidence="1">
        <name>Mg(2+)</name>
        <dbReference type="ChEBI" id="CHEBI:18420"/>
    </cofactor>
</comment>
<comment type="similarity">
    <text evidence="1">Belongs to the TRAFAC class TrmE-Era-EngA-EngB-Septin-like GTPase superfamily. EngB GTPase family.</text>
</comment>
<proteinExistence type="inferred from homology"/>
<organism>
    <name type="scientific">Streptococcus pyogenes serotype M18 (strain MGAS8232)</name>
    <dbReference type="NCBI Taxonomy" id="186103"/>
    <lineage>
        <taxon>Bacteria</taxon>
        <taxon>Bacillati</taxon>
        <taxon>Bacillota</taxon>
        <taxon>Bacilli</taxon>
        <taxon>Lactobacillales</taxon>
        <taxon>Streptococcaceae</taxon>
        <taxon>Streptococcus</taxon>
    </lineage>
</organism>
<sequence length="199" mass="22494">MAEEQVLNTHNASILLSAANKSHYPQDDLPEIALAGRSNVGKSSFINTILGRKNLARTSSKPGKTQLLNFFNIDDKLRFVDVPGYGYAKVSKSERAEWGKMIEEYLTSRDNLRAVVSLVDLRHAPSKEDIQMYDFLKYYDIPVIVVATKADKIPRGKWNKHESVVKKALNFDKSDTFIVFSSVERIGIDDSWDAILEQV</sequence>
<accession>Q8P1C8</accession>
<keyword id="KW-0131">Cell cycle</keyword>
<keyword id="KW-0132">Cell division</keyword>
<keyword id="KW-0342">GTP-binding</keyword>
<keyword id="KW-0460">Magnesium</keyword>
<keyword id="KW-0479">Metal-binding</keyword>
<keyword id="KW-0547">Nucleotide-binding</keyword>
<keyword id="KW-0717">Septation</keyword>
<feature type="chain" id="PRO_0000157793" description="Probable GTP-binding protein EngB">
    <location>
        <begin position="1"/>
        <end position="199"/>
    </location>
</feature>
<feature type="domain" description="EngB-type G" evidence="1">
    <location>
        <begin position="28"/>
        <end position="199"/>
    </location>
</feature>
<feature type="binding site" evidence="1">
    <location>
        <begin position="36"/>
        <end position="43"/>
    </location>
    <ligand>
        <name>GTP</name>
        <dbReference type="ChEBI" id="CHEBI:37565"/>
    </ligand>
</feature>
<feature type="binding site" evidence="1">
    <location>
        <position position="43"/>
    </location>
    <ligand>
        <name>Mg(2+)</name>
        <dbReference type="ChEBI" id="CHEBI:18420"/>
    </ligand>
</feature>
<feature type="binding site" evidence="1">
    <location>
        <begin position="63"/>
        <end position="67"/>
    </location>
    <ligand>
        <name>GTP</name>
        <dbReference type="ChEBI" id="CHEBI:37565"/>
    </ligand>
</feature>
<feature type="binding site" evidence="1">
    <location>
        <position position="65"/>
    </location>
    <ligand>
        <name>Mg(2+)</name>
        <dbReference type="ChEBI" id="CHEBI:18420"/>
    </ligand>
</feature>
<feature type="binding site" evidence="1">
    <location>
        <begin position="81"/>
        <end position="84"/>
    </location>
    <ligand>
        <name>GTP</name>
        <dbReference type="ChEBI" id="CHEBI:37565"/>
    </ligand>
</feature>
<feature type="binding site" evidence="1">
    <location>
        <begin position="148"/>
        <end position="151"/>
    </location>
    <ligand>
        <name>GTP</name>
        <dbReference type="ChEBI" id="CHEBI:37565"/>
    </ligand>
</feature>
<feature type="binding site" evidence="1">
    <location>
        <begin position="180"/>
        <end position="182"/>
    </location>
    <ligand>
        <name>GTP</name>
        <dbReference type="ChEBI" id="CHEBI:37565"/>
    </ligand>
</feature>
<gene>
    <name evidence="1" type="primary">engB</name>
    <name type="ordered locus">spyM18_0947</name>
</gene>
<protein>
    <recommendedName>
        <fullName evidence="1">Probable GTP-binding protein EngB</fullName>
    </recommendedName>
</protein>
<reference key="1">
    <citation type="journal article" date="2002" name="Proc. Natl. Acad. Sci. U.S.A.">
        <title>Genome sequence and comparative microarray analysis of serotype M18 group A Streptococcus strains associated with acute rheumatic fever outbreaks.</title>
        <authorList>
            <person name="Smoot J.C."/>
            <person name="Barbian K.D."/>
            <person name="Van Gompel J.J."/>
            <person name="Smoot L.M."/>
            <person name="Chaussee M.S."/>
            <person name="Sylva G.L."/>
            <person name="Sturdevant D.E."/>
            <person name="Ricklefs S.M."/>
            <person name="Porcella S.F."/>
            <person name="Parkins L.D."/>
            <person name="Beres S.B."/>
            <person name="Campbell D.S."/>
            <person name="Smith T.M."/>
            <person name="Zhang Q."/>
            <person name="Kapur V."/>
            <person name="Daly J.A."/>
            <person name="Veasy L.G."/>
            <person name="Musser J.M."/>
        </authorList>
    </citation>
    <scope>NUCLEOTIDE SEQUENCE [LARGE SCALE GENOMIC DNA]</scope>
    <source>
        <strain>MGAS8232</strain>
    </source>
</reference>